<dbReference type="EC" id="3.2.2.-" evidence="1"/>
<dbReference type="EC" id="4.2.99.18" evidence="1"/>
<dbReference type="EMBL" id="AE017199">
    <property type="protein sequence ID" value="AAR39356.1"/>
    <property type="molecule type" value="Genomic_DNA"/>
</dbReference>
<dbReference type="SMR" id="Q74MX2"/>
<dbReference type="STRING" id="228908.NEQ515"/>
<dbReference type="EnsemblBacteria" id="AAR39356">
    <property type="protein sequence ID" value="AAR39356"/>
    <property type="gene ID" value="NEQ515"/>
</dbReference>
<dbReference type="KEGG" id="neq:NEQ515"/>
<dbReference type="PATRIC" id="fig|228908.8.peg.534"/>
<dbReference type="HOGENOM" id="CLU_085935_0_0_2"/>
<dbReference type="BioCyc" id="NEQU228908:GJB6-547-MONOMER"/>
<dbReference type="Proteomes" id="UP000000578">
    <property type="component" value="Chromosome"/>
</dbReference>
<dbReference type="GO" id="GO:0140078">
    <property type="term" value="F:class I DNA-(apurinic or apyrimidinic site) endonuclease activity"/>
    <property type="evidence" value="ECO:0007669"/>
    <property type="project" value="UniProtKB-EC"/>
</dbReference>
<dbReference type="GO" id="GO:0000702">
    <property type="term" value="F:oxidized base lesion DNA N-glycosylase activity"/>
    <property type="evidence" value="ECO:0007669"/>
    <property type="project" value="UniProtKB-UniRule"/>
</dbReference>
<dbReference type="GO" id="GO:0006284">
    <property type="term" value="P:base-excision repair"/>
    <property type="evidence" value="ECO:0007669"/>
    <property type="project" value="UniProtKB-UniRule"/>
</dbReference>
<dbReference type="Gene3D" id="1.10.340.30">
    <property type="entry name" value="Hypothetical protein, domain 2"/>
    <property type="match status" value="1"/>
</dbReference>
<dbReference type="HAMAP" id="MF_01168">
    <property type="entry name" value="AGOG"/>
    <property type="match status" value="1"/>
</dbReference>
<dbReference type="InterPro" id="IPR016544">
    <property type="entry name" value="AGOG"/>
</dbReference>
<dbReference type="InterPro" id="IPR015254">
    <property type="entry name" value="AGOG-like"/>
</dbReference>
<dbReference type="InterPro" id="IPR011257">
    <property type="entry name" value="DNA_glycosylase"/>
</dbReference>
<dbReference type="NCBIfam" id="NF009785">
    <property type="entry name" value="PRK13280.1-2"/>
    <property type="match status" value="1"/>
</dbReference>
<dbReference type="Pfam" id="PF09171">
    <property type="entry name" value="AGOG"/>
    <property type="match status" value="2"/>
</dbReference>
<dbReference type="PIRSF" id="PIRSF008955">
    <property type="entry name" value="AGOG"/>
    <property type="match status" value="1"/>
</dbReference>
<dbReference type="SUPFAM" id="SSF48150">
    <property type="entry name" value="DNA-glycosylase"/>
    <property type="match status" value="1"/>
</dbReference>
<gene>
    <name type="ordered locus">NEQ515</name>
</gene>
<comment type="function">
    <text evidence="1">DNA repair enzyme that is part of the base excision repair (BER) pathway; protects from oxidative damage by removing the major product of DNA oxidation, 8-oxoguanine (GO), from single- and double-stranded DNA substrates.</text>
</comment>
<comment type="catalytic activity">
    <reaction evidence="1">
        <text>2'-deoxyribonucleotide-(2'-deoxyribose 5'-phosphate)-2'-deoxyribonucleotide-DNA = a 3'-end 2'-deoxyribonucleotide-(2,3-dehydro-2,3-deoxyribose 5'-phosphate)-DNA + a 5'-end 5'-phospho-2'-deoxyribonucleoside-DNA + H(+)</text>
        <dbReference type="Rhea" id="RHEA:66592"/>
        <dbReference type="Rhea" id="RHEA-COMP:13180"/>
        <dbReference type="Rhea" id="RHEA-COMP:16897"/>
        <dbReference type="Rhea" id="RHEA-COMP:17067"/>
        <dbReference type="ChEBI" id="CHEBI:15378"/>
        <dbReference type="ChEBI" id="CHEBI:136412"/>
        <dbReference type="ChEBI" id="CHEBI:157695"/>
        <dbReference type="ChEBI" id="CHEBI:167181"/>
        <dbReference type="EC" id="4.2.99.18"/>
    </reaction>
</comment>
<comment type="domain">
    <text>Contains two alpha-helical subdomains, with the 8-oxoguanine binding site located in a cleft at their interface. Contains a helix-hairpin-helix (HhH) structural motif and a Gly/Pro-rich sequence followed by a conserved Asp (HhH-GPD motif).</text>
</comment>
<comment type="similarity">
    <text evidence="1">Belongs to the archaeal N-glycosylase/DNA lyase (AGOG) family.</text>
</comment>
<organism>
    <name type="scientific">Nanoarchaeum equitans (strain Kin4-M)</name>
    <dbReference type="NCBI Taxonomy" id="228908"/>
    <lineage>
        <taxon>Archaea</taxon>
        <taxon>Nanobdellota</taxon>
        <taxon>Candidatus Nanoarchaeia</taxon>
        <taxon>Nanoarchaeales</taxon>
        <taxon>Nanoarchaeaceae</taxon>
        <taxon>Nanoarchaeum</taxon>
    </lineage>
</organism>
<sequence>MEDPLIKILKQFSIEDAKYVEYNLDRQFLALKENPKPVGLVIANALISYQLTMPGERYWELFAKKVNSFNDLYDFVKKYNPRFLSNKLKRLERFKPYIDIIEQNREHYYENMVALNKFLAKIMNQNIYDKTIVFSIKMFAYAMRALGYKFKPFPFEIAIPLDYRLKKINPDLNYWFYVSKQTNIPPLHIDSLIWPIFRIKNLPKKFALLKEYLSNL</sequence>
<name>AGOG_NANEQ</name>
<accession>Q74MX2</accession>
<feature type="chain" id="PRO_0000185111" description="N-glycosylase/DNA lyase">
    <location>
        <begin position="1"/>
        <end position="216"/>
    </location>
</feature>
<feature type="region of interest" description="Helix-hairpin-helix">
    <location>
        <begin position="106"/>
        <end position="170"/>
    </location>
</feature>
<feature type="active site" description="Schiff-base intermediate with DNA" evidence="1">
    <location>
        <position position="130"/>
    </location>
</feature>
<feature type="active site" evidence="1">
    <location>
        <position position="162"/>
    </location>
</feature>
<feature type="binding site" evidence="1">
    <location>
        <position position="27"/>
    </location>
    <ligand>
        <name>8-oxoguanine</name>
        <dbReference type="ChEBI" id="CHEBI:52617"/>
    </ligand>
</feature>
<feature type="binding site" evidence="1">
    <location>
        <position position="48"/>
    </location>
    <ligand>
        <name>8-oxoguanine</name>
        <dbReference type="ChEBI" id="CHEBI:52617"/>
    </ligand>
</feature>
<feature type="binding site" evidence="1">
    <location>
        <position position="59"/>
    </location>
    <ligand>
        <name>8-oxoguanine</name>
        <dbReference type="ChEBI" id="CHEBI:52617"/>
    </ligand>
</feature>
<feature type="binding site" evidence="1">
    <location>
        <position position="134"/>
    </location>
    <ligand>
        <name>8-oxoguanine</name>
        <dbReference type="ChEBI" id="CHEBI:52617"/>
    </ligand>
</feature>
<feature type="binding site" evidence="1">
    <location>
        <position position="160"/>
    </location>
    <ligand>
        <name>8-oxoguanine</name>
        <dbReference type="ChEBI" id="CHEBI:52617"/>
    </ligand>
</feature>
<feature type="binding site" evidence="1">
    <location>
        <position position="190"/>
    </location>
    <ligand>
        <name>8-oxoguanine</name>
        <dbReference type="ChEBI" id="CHEBI:52617"/>
    </ligand>
</feature>
<feature type="binding site" evidence="1">
    <location>
        <position position="194"/>
    </location>
    <ligand>
        <name>8-oxoguanine</name>
        <dbReference type="ChEBI" id="CHEBI:52617"/>
    </ligand>
</feature>
<protein>
    <recommendedName>
        <fullName evidence="1">N-glycosylase/DNA lyase</fullName>
    </recommendedName>
    <alternativeName>
        <fullName evidence="1">8-oxoguanine DNA glycosylase</fullName>
        <ecNumber evidence="1">3.2.2.-</ecNumber>
    </alternativeName>
    <alternativeName>
        <fullName evidence="1">AGOG</fullName>
    </alternativeName>
    <alternativeName>
        <fullName evidence="1">DNA-(apurinic or apyrimidinic site) lyase</fullName>
        <shortName evidence="1">AP lyase</shortName>
        <ecNumber evidence="1">4.2.99.18</ecNumber>
    </alternativeName>
</protein>
<proteinExistence type="inferred from homology"/>
<keyword id="KW-0227">DNA damage</keyword>
<keyword id="KW-0228">DNA excision</keyword>
<keyword id="KW-0234">DNA repair</keyword>
<keyword id="KW-0378">Hydrolase</keyword>
<keyword id="KW-0456">Lyase</keyword>
<keyword id="KW-1185">Reference proteome</keyword>
<reference key="1">
    <citation type="journal article" date="2003" name="Proc. Natl. Acad. Sci. U.S.A.">
        <title>The genome of Nanoarchaeum equitans: insights into early archaeal evolution and derived parasitism.</title>
        <authorList>
            <person name="Waters E."/>
            <person name="Hohn M.J."/>
            <person name="Ahel I."/>
            <person name="Graham D.E."/>
            <person name="Adams M.D."/>
            <person name="Barnstead M."/>
            <person name="Beeson K.Y."/>
            <person name="Bibbs L."/>
            <person name="Bolanos R."/>
            <person name="Keller M."/>
            <person name="Kretz K."/>
            <person name="Lin X."/>
            <person name="Mathur E."/>
            <person name="Ni J."/>
            <person name="Podar M."/>
            <person name="Richardson T."/>
            <person name="Sutton G.G."/>
            <person name="Simon M."/>
            <person name="Soell D."/>
            <person name="Stetter K.O."/>
            <person name="Short J.M."/>
            <person name="Noorderwier M."/>
        </authorList>
    </citation>
    <scope>NUCLEOTIDE SEQUENCE [LARGE SCALE GENOMIC DNA]</scope>
    <source>
        <strain>Kin4-M</strain>
    </source>
</reference>
<evidence type="ECO:0000255" key="1">
    <source>
        <dbReference type="HAMAP-Rule" id="MF_01168"/>
    </source>
</evidence>